<gene>
    <name evidence="1" type="primary">nanE</name>
    <name type="ordered locus">BAPKO_0688</name>
    <name type="ordered locus">BafPKo_0668</name>
</gene>
<name>NANE_BORAP</name>
<feature type="chain" id="PRO_0000301466" description="Putative N-acetylmannosamine-6-phosphate 2-epimerase">
    <location>
        <begin position="1"/>
        <end position="232"/>
    </location>
</feature>
<comment type="function">
    <text evidence="1">Converts N-acetylmannosamine-6-phosphate (ManNAc-6-P) to N-acetylglucosamine-6-phosphate (GlcNAc-6-P).</text>
</comment>
<comment type="catalytic activity">
    <reaction evidence="1">
        <text>an N-acyl-D-glucosamine 6-phosphate = an N-acyl-D-mannosamine 6-phosphate</text>
        <dbReference type="Rhea" id="RHEA:23932"/>
        <dbReference type="ChEBI" id="CHEBI:57599"/>
        <dbReference type="ChEBI" id="CHEBI:57666"/>
        <dbReference type="EC" id="5.1.3.9"/>
    </reaction>
</comment>
<comment type="pathway">
    <text evidence="1">Amino-sugar metabolism; N-acetylneuraminate degradation; D-fructose 6-phosphate from N-acetylneuraminate: step 3/5.</text>
</comment>
<comment type="similarity">
    <text evidence="1">Belongs to the NanE family.</text>
</comment>
<organism>
    <name type="scientific">Borreliella afzelii (strain PKo)</name>
    <name type="common">Borrelia afzelii</name>
    <dbReference type="NCBI Taxonomy" id="390236"/>
    <lineage>
        <taxon>Bacteria</taxon>
        <taxon>Pseudomonadati</taxon>
        <taxon>Spirochaetota</taxon>
        <taxon>Spirochaetia</taxon>
        <taxon>Spirochaetales</taxon>
        <taxon>Borreliaceae</taxon>
        <taxon>Borreliella</taxon>
    </lineage>
</organism>
<reference key="1">
    <citation type="journal article" date="2006" name="BMC Genomics">
        <title>Comparative genome analysis: selection pressure on the Borrelia vls cassettes is essential for infectivity.</title>
        <authorList>
            <person name="Gloeckner G."/>
            <person name="Schulte-Spechtel U."/>
            <person name="Schilhabel M."/>
            <person name="Felder M."/>
            <person name="Suehnel J."/>
            <person name="Wilske B."/>
            <person name="Platzer M."/>
        </authorList>
    </citation>
    <scope>NUCLEOTIDE SEQUENCE [LARGE SCALE GENOMIC DNA]</scope>
    <source>
        <strain>PKo</strain>
    </source>
</reference>
<reference key="2">
    <citation type="journal article" date="2011" name="J. Bacteriol.">
        <title>Whole-genome sequences of two Borrelia afzelii and two Borrelia garinii Lyme disease agent isolates.</title>
        <authorList>
            <person name="Casjens S.R."/>
            <person name="Mongodin E.F."/>
            <person name="Qiu W.G."/>
            <person name="Dunn J.J."/>
            <person name="Luft B.J."/>
            <person name="Fraser-Liggett C.M."/>
            <person name="Schutzer S.E."/>
        </authorList>
    </citation>
    <scope>NUCLEOTIDE SEQUENCE [LARGE SCALE GENOMIC DNA]</scope>
    <source>
        <strain>PKo</strain>
    </source>
</reference>
<evidence type="ECO:0000255" key="1">
    <source>
        <dbReference type="HAMAP-Rule" id="MF_01235"/>
    </source>
</evidence>
<proteinExistence type="inferred from homology"/>
<sequence>MIIIEKIKRGLIVSCQALENEPLHSSFIMSKMALAAKMGGAIGIRANGVNDISQIKLEVDLPIIGIIKRNYNNCDVFITPTMKEIDELCNEGVDIIALDATFRNRPDSVSLDDFFKSIKKKYPKQCLMADISSLDEAINADKLGFDFIGTTLYGYTKSTNGLDIADNDFNFLKTLINSNLKSTLIVEGKIDTPLKAQKCFEMGVDLVVVGGAITRPVEITKKFVEKINQVKR</sequence>
<accession>Q0SMK9</accession>
<accession>G0IQJ4</accession>
<keyword id="KW-0119">Carbohydrate metabolism</keyword>
<keyword id="KW-0413">Isomerase</keyword>
<dbReference type="EC" id="5.1.3.9" evidence="1"/>
<dbReference type="EMBL" id="CP000395">
    <property type="protein sequence ID" value="ABH01919.1"/>
    <property type="molecule type" value="Genomic_DNA"/>
</dbReference>
<dbReference type="EMBL" id="CP002933">
    <property type="protein sequence ID" value="AEL69864.1"/>
    <property type="molecule type" value="Genomic_DNA"/>
</dbReference>
<dbReference type="RefSeq" id="WP_011601146.1">
    <property type="nucleotide sequence ID" value="NC_008277.1"/>
</dbReference>
<dbReference type="SMR" id="Q0SMK9"/>
<dbReference type="STRING" id="29518.BLA32_01015"/>
<dbReference type="KEGG" id="baf:BAPKO_0688"/>
<dbReference type="KEGG" id="bafz:BafPKo_0668"/>
<dbReference type="PATRIC" id="fig|390236.22.peg.637"/>
<dbReference type="eggNOG" id="COG3010">
    <property type="taxonomic scope" value="Bacteria"/>
</dbReference>
<dbReference type="HOGENOM" id="CLU_086300_1_0_12"/>
<dbReference type="OrthoDB" id="9781704at2"/>
<dbReference type="UniPathway" id="UPA00629">
    <property type="reaction ID" value="UER00682"/>
</dbReference>
<dbReference type="Proteomes" id="UP000005216">
    <property type="component" value="Chromosome"/>
</dbReference>
<dbReference type="GO" id="GO:0005829">
    <property type="term" value="C:cytosol"/>
    <property type="evidence" value="ECO:0007669"/>
    <property type="project" value="TreeGrafter"/>
</dbReference>
<dbReference type="GO" id="GO:0047465">
    <property type="term" value="F:N-acylglucosamine-6-phosphate 2-epimerase activity"/>
    <property type="evidence" value="ECO:0007669"/>
    <property type="project" value="UniProtKB-EC"/>
</dbReference>
<dbReference type="GO" id="GO:0005975">
    <property type="term" value="P:carbohydrate metabolic process"/>
    <property type="evidence" value="ECO:0007669"/>
    <property type="project" value="UniProtKB-UniRule"/>
</dbReference>
<dbReference type="GO" id="GO:0006053">
    <property type="term" value="P:N-acetylmannosamine catabolic process"/>
    <property type="evidence" value="ECO:0007669"/>
    <property type="project" value="TreeGrafter"/>
</dbReference>
<dbReference type="GO" id="GO:0019262">
    <property type="term" value="P:N-acetylneuraminate catabolic process"/>
    <property type="evidence" value="ECO:0007669"/>
    <property type="project" value="UniProtKB-UniRule"/>
</dbReference>
<dbReference type="CDD" id="cd04729">
    <property type="entry name" value="NanE"/>
    <property type="match status" value="1"/>
</dbReference>
<dbReference type="FunFam" id="3.20.20.70:FF:000035">
    <property type="entry name" value="Putative N-acetylmannosamine-6-phosphate 2-epimerase"/>
    <property type="match status" value="1"/>
</dbReference>
<dbReference type="Gene3D" id="3.20.20.70">
    <property type="entry name" value="Aldolase class I"/>
    <property type="match status" value="1"/>
</dbReference>
<dbReference type="HAMAP" id="MF_01235">
    <property type="entry name" value="ManNAc6P_epimer"/>
    <property type="match status" value="1"/>
</dbReference>
<dbReference type="InterPro" id="IPR013785">
    <property type="entry name" value="Aldolase_TIM"/>
</dbReference>
<dbReference type="InterPro" id="IPR007260">
    <property type="entry name" value="NanE"/>
</dbReference>
<dbReference type="InterPro" id="IPR011060">
    <property type="entry name" value="RibuloseP-bd_barrel"/>
</dbReference>
<dbReference type="NCBIfam" id="NF002231">
    <property type="entry name" value="PRK01130.1"/>
    <property type="match status" value="1"/>
</dbReference>
<dbReference type="PANTHER" id="PTHR36204">
    <property type="entry name" value="N-ACETYLMANNOSAMINE-6-PHOSPHATE 2-EPIMERASE-RELATED"/>
    <property type="match status" value="1"/>
</dbReference>
<dbReference type="PANTHER" id="PTHR36204:SF1">
    <property type="entry name" value="N-ACETYLMANNOSAMINE-6-PHOSPHATE 2-EPIMERASE-RELATED"/>
    <property type="match status" value="1"/>
</dbReference>
<dbReference type="Pfam" id="PF04131">
    <property type="entry name" value="NanE"/>
    <property type="match status" value="1"/>
</dbReference>
<dbReference type="SUPFAM" id="SSF51366">
    <property type="entry name" value="Ribulose-phoshate binding barrel"/>
    <property type="match status" value="1"/>
</dbReference>
<protein>
    <recommendedName>
        <fullName evidence="1">Putative N-acetylmannosamine-6-phosphate 2-epimerase</fullName>
        <ecNumber evidence="1">5.1.3.9</ecNumber>
    </recommendedName>
    <alternativeName>
        <fullName evidence="1">ManNAc-6-P epimerase</fullName>
    </alternativeName>
</protein>